<feature type="chain" id="PRO_1000134878" description="4-hydroxy-tetrahydrodipicolinate synthase">
    <location>
        <begin position="1"/>
        <end position="311"/>
    </location>
</feature>
<feature type="active site" description="Proton donor/acceptor" evidence="1">
    <location>
        <position position="140"/>
    </location>
</feature>
<feature type="active site" description="Schiff-base intermediate with substrate" evidence="1">
    <location>
        <position position="168"/>
    </location>
</feature>
<feature type="binding site" evidence="1">
    <location>
        <position position="51"/>
    </location>
    <ligand>
        <name>pyruvate</name>
        <dbReference type="ChEBI" id="CHEBI:15361"/>
    </ligand>
</feature>
<feature type="binding site" evidence="1">
    <location>
        <position position="209"/>
    </location>
    <ligand>
        <name>pyruvate</name>
        <dbReference type="ChEBI" id="CHEBI:15361"/>
    </ligand>
</feature>
<feature type="site" description="Part of a proton relay during catalysis" evidence="1">
    <location>
        <position position="50"/>
    </location>
</feature>
<feature type="site" description="Part of a proton relay during catalysis" evidence="1">
    <location>
        <position position="114"/>
    </location>
</feature>
<sequence>MSYQDLKECKIITAFITPFHEDGSINFDAIPALIEHLLAHHTDGILLAGTTAESPTLTHDEELELFAAVQKVVNGRVPLIAGVGTNDTRDSIEFVKEVAEFGGFAAGLAIVPYYNKPSQEGMYQHFKTIADASDLPIIIYNIPGRVVVELTPETMLRLADHPNIIGVKECTSLANMAYLIEHKPEEFLIYTGEDGDAFHAMNLGADGVISVASHTNGDEMHEMFTAIAESDMKKAAAIQRKFIPKVNALFSYPSPAPVKAILNYMGFEAGPTRLPLVPAPEEDAKRIIKVVVDGDYEATKATVTGVLRPDY</sequence>
<organism>
    <name type="scientific">Streptococcus pneumoniae (strain 70585)</name>
    <dbReference type="NCBI Taxonomy" id="488221"/>
    <lineage>
        <taxon>Bacteria</taxon>
        <taxon>Bacillati</taxon>
        <taxon>Bacillota</taxon>
        <taxon>Bacilli</taxon>
        <taxon>Lactobacillales</taxon>
        <taxon>Streptococcaceae</taxon>
        <taxon>Streptococcus</taxon>
    </lineage>
</organism>
<accession>C1C6Z0</accession>
<dbReference type="EC" id="4.3.3.7" evidence="1"/>
<dbReference type="EMBL" id="CP000918">
    <property type="protein sequence ID" value="ACO17914.1"/>
    <property type="molecule type" value="Genomic_DNA"/>
</dbReference>
<dbReference type="RefSeq" id="WP_000121629.1">
    <property type="nucleotide sequence ID" value="NC_012468.1"/>
</dbReference>
<dbReference type="SMR" id="C1C6Z0"/>
<dbReference type="GeneID" id="45653647"/>
<dbReference type="KEGG" id="snm:SP70585_1054"/>
<dbReference type="HOGENOM" id="CLU_049343_7_1_9"/>
<dbReference type="UniPathway" id="UPA00034">
    <property type="reaction ID" value="UER00017"/>
</dbReference>
<dbReference type="Proteomes" id="UP000002211">
    <property type="component" value="Chromosome"/>
</dbReference>
<dbReference type="GO" id="GO:0005829">
    <property type="term" value="C:cytosol"/>
    <property type="evidence" value="ECO:0007669"/>
    <property type="project" value="TreeGrafter"/>
</dbReference>
<dbReference type="GO" id="GO:0008840">
    <property type="term" value="F:4-hydroxy-tetrahydrodipicolinate synthase activity"/>
    <property type="evidence" value="ECO:0007669"/>
    <property type="project" value="UniProtKB-UniRule"/>
</dbReference>
<dbReference type="GO" id="GO:0019877">
    <property type="term" value="P:diaminopimelate biosynthetic process"/>
    <property type="evidence" value="ECO:0007669"/>
    <property type="project" value="UniProtKB-UniRule"/>
</dbReference>
<dbReference type="GO" id="GO:0009089">
    <property type="term" value="P:lysine biosynthetic process via diaminopimelate"/>
    <property type="evidence" value="ECO:0007669"/>
    <property type="project" value="UniProtKB-UniRule"/>
</dbReference>
<dbReference type="CDD" id="cd00950">
    <property type="entry name" value="DHDPS"/>
    <property type="match status" value="1"/>
</dbReference>
<dbReference type="Gene3D" id="3.20.20.70">
    <property type="entry name" value="Aldolase class I"/>
    <property type="match status" value="1"/>
</dbReference>
<dbReference type="HAMAP" id="MF_00418">
    <property type="entry name" value="DapA"/>
    <property type="match status" value="1"/>
</dbReference>
<dbReference type="InterPro" id="IPR013785">
    <property type="entry name" value="Aldolase_TIM"/>
</dbReference>
<dbReference type="InterPro" id="IPR005263">
    <property type="entry name" value="DapA"/>
</dbReference>
<dbReference type="InterPro" id="IPR002220">
    <property type="entry name" value="DapA-like"/>
</dbReference>
<dbReference type="InterPro" id="IPR020625">
    <property type="entry name" value="Schiff_base-form_aldolases_AS"/>
</dbReference>
<dbReference type="NCBIfam" id="TIGR00674">
    <property type="entry name" value="dapA"/>
    <property type="match status" value="1"/>
</dbReference>
<dbReference type="PANTHER" id="PTHR12128:SF66">
    <property type="entry name" value="4-HYDROXY-2-OXOGLUTARATE ALDOLASE, MITOCHONDRIAL"/>
    <property type="match status" value="1"/>
</dbReference>
<dbReference type="PANTHER" id="PTHR12128">
    <property type="entry name" value="DIHYDRODIPICOLINATE SYNTHASE"/>
    <property type="match status" value="1"/>
</dbReference>
<dbReference type="Pfam" id="PF00701">
    <property type="entry name" value="DHDPS"/>
    <property type="match status" value="1"/>
</dbReference>
<dbReference type="PIRSF" id="PIRSF001365">
    <property type="entry name" value="DHDPS"/>
    <property type="match status" value="1"/>
</dbReference>
<dbReference type="PRINTS" id="PR00146">
    <property type="entry name" value="DHPICSNTHASE"/>
</dbReference>
<dbReference type="SMART" id="SM01130">
    <property type="entry name" value="DHDPS"/>
    <property type="match status" value="1"/>
</dbReference>
<dbReference type="SUPFAM" id="SSF51569">
    <property type="entry name" value="Aldolase"/>
    <property type="match status" value="1"/>
</dbReference>
<dbReference type="PROSITE" id="PS00666">
    <property type="entry name" value="DHDPS_2"/>
    <property type="match status" value="1"/>
</dbReference>
<name>DAPA_STRP7</name>
<gene>
    <name evidence="1" type="primary">dapA</name>
    <name type="ordered locus">SP70585_1054</name>
</gene>
<proteinExistence type="inferred from homology"/>
<evidence type="ECO:0000255" key="1">
    <source>
        <dbReference type="HAMAP-Rule" id="MF_00418"/>
    </source>
</evidence>
<evidence type="ECO:0000305" key="2"/>
<reference key="1">
    <citation type="journal article" date="2010" name="Genome Biol.">
        <title>Structure and dynamics of the pan-genome of Streptococcus pneumoniae and closely related species.</title>
        <authorList>
            <person name="Donati C."/>
            <person name="Hiller N.L."/>
            <person name="Tettelin H."/>
            <person name="Muzzi A."/>
            <person name="Croucher N.J."/>
            <person name="Angiuoli S.V."/>
            <person name="Oggioni M."/>
            <person name="Dunning Hotopp J.C."/>
            <person name="Hu F.Z."/>
            <person name="Riley D.R."/>
            <person name="Covacci A."/>
            <person name="Mitchell T.J."/>
            <person name="Bentley S.D."/>
            <person name="Kilian M."/>
            <person name="Ehrlich G.D."/>
            <person name="Rappuoli R."/>
            <person name="Moxon E.R."/>
            <person name="Masignani V."/>
        </authorList>
    </citation>
    <scope>NUCLEOTIDE SEQUENCE [LARGE SCALE GENOMIC DNA]</scope>
    <source>
        <strain>70585</strain>
    </source>
</reference>
<comment type="function">
    <text evidence="1">Catalyzes the condensation of (S)-aspartate-beta-semialdehyde [(S)-ASA] and pyruvate to 4-hydroxy-tetrahydrodipicolinate (HTPA).</text>
</comment>
<comment type="catalytic activity">
    <reaction evidence="1">
        <text>L-aspartate 4-semialdehyde + pyruvate = (2S,4S)-4-hydroxy-2,3,4,5-tetrahydrodipicolinate + H2O + H(+)</text>
        <dbReference type="Rhea" id="RHEA:34171"/>
        <dbReference type="ChEBI" id="CHEBI:15361"/>
        <dbReference type="ChEBI" id="CHEBI:15377"/>
        <dbReference type="ChEBI" id="CHEBI:15378"/>
        <dbReference type="ChEBI" id="CHEBI:67139"/>
        <dbReference type="ChEBI" id="CHEBI:537519"/>
        <dbReference type="EC" id="4.3.3.7"/>
    </reaction>
</comment>
<comment type="pathway">
    <text evidence="1">Amino-acid biosynthesis; L-lysine biosynthesis via DAP pathway; (S)-tetrahydrodipicolinate from L-aspartate: step 3/4.</text>
</comment>
<comment type="subunit">
    <text evidence="1">Homotetramer; dimer of dimers.</text>
</comment>
<comment type="subcellular location">
    <subcellularLocation>
        <location evidence="1">Cytoplasm</location>
    </subcellularLocation>
</comment>
<comment type="similarity">
    <text evidence="1">Belongs to the DapA family.</text>
</comment>
<comment type="caution">
    <text evidence="2">Was originally thought to be a dihydrodipicolinate synthase (DHDPS), catalyzing the condensation of (S)-aspartate-beta-semialdehyde [(S)-ASA] and pyruvate to dihydrodipicolinate (DHDP). However, it was shown in E.coli that the product of the enzymatic reaction is not dihydrodipicolinate but in fact (4S)-4-hydroxy-2,3,4,5-tetrahydro-(2S)-dipicolinic acid (HTPA), and that the consecutive dehydration reaction leading to DHDP is not spontaneous but catalyzed by DapB.</text>
</comment>
<protein>
    <recommendedName>
        <fullName evidence="1">4-hydroxy-tetrahydrodipicolinate synthase</fullName>
        <shortName evidence="1">HTPA synthase</shortName>
        <ecNumber evidence="1">4.3.3.7</ecNumber>
    </recommendedName>
</protein>
<keyword id="KW-0028">Amino-acid biosynthesis</keyword>
<keyword id="KW-0963">Cytoplasm</keyword>
<keyword id="KW-0220">Diaminopimelate biosynthesis</keyword>
<keyword id="KW-0456">Lyase</keyword>
<keyword id="KW-0457">Lysine biosynthesis</keyword>
<keyword id="KW-0704">Schiff base</keyword>